<sequence length="430" mass="45579">MSLMTKLGLRTLVASCLIAVGGAANAQLNVLVTGVGSTQFPIATANFANEANSPQQVSTIVRQDLQRSGKFTNIDAGATPVSETDSVDLGSWKAKGANAFVSGSVNRLPNGQYEVRFKLYDTVKGESLGGLVLVSPESGLRMSAHKVADYIYAKLMGGRGVFATRLSYVIKTGGRYQLQISDSDGQDAHIALSSPEPIISPAWSPDGTKVAYVSFEKKKPIVYIHDLPTGRRIVVSDQKGNNSAPAWSPDGRTLAVALSRTGNTQIFAVNADGSGLRRLTQGSSIDTEPCFSPDGQSIYFTSDRGGQPQIYKMSAQGENAGAAQRVTFTGSYNTSPRVSPDGKQLAYISRVGGGFKLYIQDLQGNTATGLTDTTHDESPSFAANGQYILYATQVNGRGVLAAVSTDGRTRQVLSVQGGSVREPSWGPFMQ</sequence>
<gene>
    <name evidence="1" type="primary">tolB</name>
    <name type="ordered locus">Bxeno_A0539</name>
    <name type="ORF">Bxe_A3920</name>
</gene>
<keyword id="KW-0131">Cell cycle</keyword>
<keyword id="KW-0132">Cell division</keyword>
<keyword id="KW-0574">Periplasm</keyword>
<keyword id="KW-1185">Reference proteome</keyword>
<keyword id="KW-0732">Signal</keyword>
<accession>Q145B2</accession>
<feature type="signal peptide" evidence="1">
    <location>
        <begin position="1"/>
        <end position="26"/>
    </location>
</feature>
<feature type="chain" id="PRO_0000259038" description="Tol-Pal system protein TolB" evidence="1">
    <location>
        <begin position="27"/>
        <end position="430"/>
    </location>
</feature>
<evidence type="ECO:0000255" key="1">
    <source>
        <dbReference type="HAMAP-Rule" id="MF_00671"/>
    </source>
</evidence>
<protein>
    <recommendedName>
        <fullName evidence="1">Tol-Pal system protein TolB</fullName>
    </recommendedName>
</protein>
<proteinExistence type="inferred from homology"/>
<comment type="function">
    <text evidence="1">Part of the Tol-Pal system, which plays a role in outer membrane invagination during cell division and is important for maintaining outer membrane integrity.</text>
</comment>
<comment type="subunit">
    <text evidence="1">The Tol-Pal system is composed of five core proteins: the inner membrane proteins TolA, TolQ and TolR, the periplasmic protein TolB and the outer membrane protein Pal. They form a network linking the inner and outer membranes and the peptidoglycan layer.</text>
</comment>
<comment type="subcellular location">
    <subcellularLocation>
        <location evidence="1">Periplasm</location>
    </subcellularLocation>
</comment>
<comment type="similarity">
    <text evidence="1">Belongs to the TolB family.</text>
</comment>
<organism>
    <name type="scientific">Paraburkholderia xenovorans (strain LB400)</name>
    <dbReference type="NCBI Taxonomy" id="266265"/>
    <lineage>
        <taxon>Bacteria</taxon>
        <taxon>Pseudomonadati</taxon>
        <taxon>Pseudomonadota</taxon>
        <taxon>Betaproteobacteria</taxon>
        <taxon>Burkholderiales</taxon>
        <taxon>Burkholderiaceae</taxon>
        <taxon>Paraburkholderia</taxon>
    </lineage>
</organism>
<reference key="1">
    <citation type="journal article" date="2006" name="Proc. Natl. Acad. Sci. U.S.A.">
        <title>Burkholderia xenovorans LB400 harbors a multi-replicon, 9.73-Mbp genome shaped for versatility.</title>
        <authorList>
            <person name="Chain P.S.G."/>
            <person name="Denef V.J."/>
            <person name="Konstantinidis K.T."/>
            <person name="Vergez L.M."/>
            <person name="Agullo L."/>
            <person name="Reyes V.L."/>
            <person name="Hauser L."/>
            <person name="Cordova M."/>
            <person name="Gomez L."/>
            <person name="Gonzalez M."/>
            <person name="Land M."/>
            <person name="Lao V."/>
            <person name="Larimer F."/>
            <person name="LiPuma J.J."/>
            <person name="Mahenthiralingam E."/>
            <person name="Malfatti S.A."/>
            <person name="Marx C.J."/>
            <person name="Parnell J.J."/>
            <person name="Ramette A."/>
            <person name="Richardson P."/>
            <person name="Seeger M."/>
            <person name="Smith D."/>
            <person name="Spilker T."/>
            <person name="Sul W.J."/>
            <person name="Tsoi T.V."/>
            <person name="Ulrich L.E."/>
            <person name="Zhulin I.B."/>
            <person name="Tiedje J.M."/>
        </authorList>
    </citation>
    <scope>NUCLEOTIDE SEQUENCE [LARGE SCALE GENOMIC DNA]</scope>
    <source>
        <strain>LB400</strain>
    </source>
</reference>
<name>TOLB_PARXL</name>
<dbReference type="EMBL" id="CP000270">
    <property type="protein sequence ID" value="ABE29077.1"/>
    <property type="molecule type" value="Genomic_DNA"/>
</dbReference>
<dbReference type="RefSeq" id="WP_011486896.1">
    <property type="nucleotide sequence ID" value="NC_007951.1"/>
</dbReference>
<dbReference type="SMR" id="Q145B2"/>
<dbReference type="STRING" id="266265.Bxe_A3920"/>
<dbReference type="KEGG" id="bxb:DR64_1596"/>
<dbReference type="KEGG" id="bxe:Bxe_A3920"/>
<dbReference type="PATRIC" id="fig|266265.5.peg.563"/>
<dbReference type="eggNOG" id="COG0823">
    <property type="taxonomic scope" value="Bacteria"/>
</dbReference>
<dbReference type="OrthoDB" id="9802240at2"/>
<dbReference type="Proteomes" id="UP000001817">
    <property type="component" value="Chromosome 1"/>
</dbReference>
<dbReference type="GO" id="GO:0042597">
    <property type="term" value="C:periplasmic space"/>
    <property type="evidence" value="ECO:0007669"/>
    <property type="project" value="UniProtKB-SubCell"/>
</dbReference>
<dbReference type="GO" id="GO:0051301">
    <property type="term" value="P:cell division"/>
    <property type="evidence" value="ECO:0007669"/>
    <property type="project" value="UniProtKB-UniRule"/>
</dbReference>
<dbReference type="GO" id="GO:0017038">
    <property type="term" value="P:protein import"/>
    <property type="evidence" value="ECO:0007669"/>
    <property type="project" value="InterPro"/>
</dbReference>
<dbReference type="Gene3D" id="2.120.10.30">
    <property type="entry name" value="TolB, C-terminal domain"/>
    <property type="match status" value="1"/>
</dbReference>
<dbReference type="Gene3D" id="3.40.50.10070">
    <property type="entry name" value="TolB, N-terminal domain"/>
    <property type="match status" value="1"/>
</dbReference>
<dbReference type="HAMAP" id="MF_00671">
    <property type="entry name" value="TolB"/>
    <property type="match status" value="1"/>
</dbReference>
<dbReference type="InterPro" id="IPR011042">
    <property type="entry name" value="6-blade_b-propeller_TolB-like"/>
</dbReference>
<dbReference type="InterPro" id="IPR011659">
    <property type="entry name" value="PD40"/>
</dbReference>
<dbReference type="InterPro" id="IPR014167">
    <property type="entry name" value="Tol-Pal_TolB"/>
</dbReference>
<dbReference type="InterPro" id="IPR007195">
    <property type="entry name" value="TolB_N"/>
</dbReference>
<dbReference type="NCBIfam" id="TIGR02800">
    <property type="entry name" value="propeller_TolB"/>
    <property type="match status" value="1"/>
</dbReference>
<dbReference type="PANTHER" id="PTHR36842:SF1">
    <property type="entry name" value="PROTEIN TOLB"/>
    <property type="match status" value="1"/>
</dbReference>
<dbReference type="PANTHER" id="PTHR36842">
    <property type="entry name" value="PROTEIN TOLB HOMOLOG"/>
    <property type="match status" value="1"/>
</dbReference>
<dbReference type="Pfam" id="PF07676">
    <property type="entry name" value="PD40"/>
    <property type="match status" value="5"/>
</dbReference>
<dbReference type="Pfam" id="PF04052">
    <property type="entry name" value="TolB_N"/>
    <property type="match status" value="1"/>
</dbReference>
<dbReference type="SUPFAM" id="SSF52964">
    <property type="entry name" value="TolB, N-terminal domain"/>
    <property type="match status" value="1"/>
</dbReference>
<dbReference type="SUPFAM" id="SSF69304">
    <property type="entry name" value="Tricorn protease N-terminal domain"/>
    <property type="match status" value="1"/>
</dbReference>